<reference key="1">
    <citation type="journal article" date="2010" name="Genome Biol.">
        <title>Structure and dynamics of the pan-genome of Streptococcus pneumoniae and closely related species.</title>
        <authorList>
            <person name="Donati C."/>
            <person name="Hiller N.L."/>
            <person name="Tettelin H."/>
            <person name="Muzzi A."/>
            <person name="Croucher N.J."/>
            <person name="Angiuoli S.V."/>
            <person name="Oggioni M."/>
            <person name="Dunning Hotopp J.C."/>
            <person name="Hu F.Z."/>
            <person name="Riley D.R."/>
            <person name="Covacci A."/>
            <person name="Mitchell T.J."/>
            <person name="Bentley S.D."/>
            <person name="Kilian M."/>
            <person name="Ehrlich G.D."/>
            <person name="Rappuoli R."/>
            <person name="Moxon E.R."/>
            <person name="Masignani V."/>
        </authorList>
    </citation>
    <scope>NUCLEOTIDE SEQUENCE [LARGE SCALE GENOMIC DNA]</scope>
    <source>
        <strain>JJA</strain>
    </source>
</reference>
<gene>
    <name evidence="1" type="primary">metAA</name>
    <name type="ordered locus">SPJ_1482</name>
</gene>
<evidence type="ECO:0000255" key="1">
    <source>
        <dbReference type="HAMAP-Rule" id="MF_00295"/>
    </source>
</evidence>
<name>METAA_STRZJ</name>
<sequence length="314" mass="36926">MPIRIDKKLPAVEILRTENIFVMDDQRAAHQDIRPLKILILNLMPQKMVTETQLLRHLANTPLQLDIDFLYMESHRSKTTRSEHMETFYKTFPEVKDEYFDGMIITGAPVEHLPFEEVDYWEEFRQMLEWSKTHVYSTLHICWGAQAGLYLRYGVEKYQMDSKLSGIYPQDTLKEGHLLFRGFDDSYVSPHSRHTEISKEEVLNKTNLEILSEGPQVGVSILASRDLREIYSFGHLEYDRDTLAKEYFRDRDAGFDPHIPENYFKDDDVNQVPCLCWSSSAALFFSNWVNHAVYQETPFDWRKIEDDASAYGYL</sequence>
<comment type="function">
    <text evidence="1">Transfers an acetyl group from acetyl-CoA to L-homoserine, forming acetyl-L-homoserine.</text>
</comment>
<comment type="catalytic activity">
    <reaction evidence="1">
        <text>L-homoserine + acetyl-CoA = O-acetyl-L-homoserine + CoA</text>
        <dbReference type="Rhea" id="RHEA:13701"/>
        <dbReference type="ChEBI" id="CHEBI:57287"/>
        <dbReference type="ChEBI" id="CHEBI:57288"/>
        <dbReference type="ChEBI" id="CHEBI:57476"/>
        <dbReference type="ChEBI" id="CHEBI:57716"/>
        <dbReference type="EC" id="2.3.1.31"/>
    </reaction>
</comment>
<comment type="pathway">
    <text evidence="1">Amino-acid biosynthesis; L-methionine biosynthesis via de novo pathway; O-acetyl-L-homoserine from L-homoserine: step 1/1.</text>
</comment>
<comment type="subcellular location">
    <subcellularLocation>
        <location evidence="1">Cytoplasm</location>
    </subcellularLocation>
</comment>
<comment type="similarity">
    <text evidence="1">Belongs to the MetA family.</text>
</comment>
<dbReference type="EC" id="2.3.1.31" evidence="1"/>
<dbReference type="EMBL" id="CP000919">
    <property type="protein sequence ID" value="ACO18115.1"/>
    <property type="molecule type" value="Genomic_DNA"/>
</dbReference>
<dbReference type="SMR" id="C1CFF9"/>
<dbReference type="KEGG" id="sjj:SPJ_1482"/>
<dbReference type="HOGENOM" id="CLU_057851_0_1_9"/>
<dbReference type="UniPathway" id="UPA00051">
    <property type="reaction ID" value="UER00074"/>
</dbReference>
<dbReference type="Proteomes" id="UP000002206">
    <property type="component" value="Chromosome"/>
</dbReference>
<dbReference type="GO" id="GO:0005737">
    <property type="term" value="C:cytoplasm"/>
    <property type="evidence" value="ECO:0007669"/>
    <property type="project" value="UniProtKB-SubCell"/>
</dbReference>
<dbReference type="GO" id="GO:0004414">
    <property type="term" value="F:homoserine O-acetyltransferase activity"/>
    <property type="evidence" value="ECO:0007669"/>
    <property type="project" value="UniProtKB-EC"/>
</dbReference>
<dbReference type="GO" id="GO:0008899">
    <property type="term" value="F:homoserine O-succinyltransferase activity"/>
    <property type="evidence" value="ECO:0007669"/>
    <property type="project" value="UniProtKB-UniRule"/>
</dbReference>
<dbReference type="GO" id="GO:0019281">
    <property type="term" value="P:L-methionine biosynthetic process from homoserine via O-succinyl-L-homoserine and cystathionine"/>
    <property type="evidence" value="ECO:0007669"/>
    <property type="project" value="InterPro"/>
</dbReference>
<dbReference type="CDD" id="cd03131">
    <property type="entry name" value="GATase1_HTS"/>
    <property type="match status" value="1"/>
</dbReference>
<dbReference type="FunFam" id="3.40.50.880:FF:000004">
    <property type="entry name" value="Homoserine O-succinyltransferase"/>
    <property type="match status" value="1"/>
</dbReference>
<dbReference type="Gene3D" id="3.40.50.880">
    <property type="match status" value="1"/>
</dbReference>
<dbReference type="HAMAP" id="MF_00295">
    <property type="entry name" value="MetA_acyltransf"/>
    <property type="match status" value="1"/>
</dbReference>
<dbReference type="InterPro" id="IPR029062">
    <property type="entry name" value="Class_I_gatase-like"/>
</dbReference>
<dbReference type="InterPro" id="IPR005697">
    <property type="entry name" value="HST_MetA"/>
</dbReference>
<dbReference type="InterPro" id="IPR033752">
    <property type="entry name" value="MetA_family"/>
</dbReference>
<dbReference type="NCBIfam" id="TIGR01001">
    <property type="entry name" value="metA"/>
    <property type="match status" value="1"/>
</dbReference>
<dbReference type="PANTHER" id="PTHR20919">
    <property type="entry name" value="HOMOSERINE O-SUCCINYLTRANSFERASE"/>
    <property type="match status" value="1"/>
</dbReference>
<dbReference type="PANTHER" id="PTHR20919:SF0">
    <property type="entry name" value="HOMOSERINE O-SUCCINYLTRANSFERASE"/>
    <property type="match status" value="1"/>
</dbReference>
<dbReference type="Pfam" id="PF04204">
    <property type="entry name" value="HTS"/>
    <property type="match status" value="1"/>
</dbReference>
<dbReference type="PIRSF" id="PIRSF000450">
    <property type="entry name" value="H_ser_succinyltr"/>
    <property type="match status" value="1"/>
</dbReference>
<dbReference type="SUPFAM" id="SSF52317">
    <property type="entry name" value="Class I glutamine amidotransferase-like"/>
    <property type="match status" value="1"/>
</dbReference>
<protein>
    <recommendedName>
        <fullName evidence="1">Homoserine O-acetyltransferase</fullName>
        <shortName evidence="1">HAT</shortName>
        <ecNumber evidence="1">2.3.1.31</ecNumber>
    </recommendedName>
    <alternativeName>
        <fullName evidence="1">Homoserine transacetylase</fullName>
        <shortName evidence="1">HTA</shortName>
    </alternativeName>
</protein>
<accession>C1CFF9</accession>
<proteinExistence type="inferred from homology"/>
<organism>
    <name type="scientific">Streptococcus pneumoniae (strain JJA)</name>
    <dbReference type="NCBI Taxonomy" id="488222"/>
    <lineage>
        <taxon>Bacteria</taxon>
        <taxon>Bacillati</taxon>
        <taxon>Bacillota</taxon>
        <taxon>Bacilli</taxon>
        <taxon>Lactobacillales</taxon>
        <taxon>Streptococcaceae</taxon>
        <taxon>Streptococcus</taxon>
    </lineage>
</organism>
<feature type="chain" id="PRO_1000132714" description="Homoserine O-acetyltransferase">
    <location>
        <begin position="1"/>
        <end position="314"/>
    </location>
</feature>
<feature type="active site" description="Acyl-thioester intermediate" evidence="1">
    <location>
        <position position="142"/>
    </location>
</feature>
<feature type="active site" description="Proton acceptor" evidence="1">
    <location>
        <position position="235"/>
    </location>
</feature>
<feature type="active site" evidence="1">
    <location>
        <position position="237"/>
    </location>
</feature>
<feature type="binding site" evidence="1">
    <location>
        <position position="163"/>
    </location>
    <ligand>
        <name>substrate</name>
    </ligand>
</feature>
<feature type="binding site" evidence="1">
    <location>
        <position position="192"/>
    </location>
    <ligand>
        <name>substrate</name>
    </ligand>
</feature>
<feature type="binding site" evidence="1">
    <location>
        <position position="249"/>
    </location>
    <ligand>
        <name>substrate</name>
    </ligand>
</feature>
<feature type="site" description="Important for acyl-CoA specificity" evidence="1">
    <location>
        <position position="111"/>
    </location>
</feature>
<feature type="site" description="Important for substrate specificity" evidence="1">
    <location>
        <position position="192"/>
    </location>
</feature>
<keyword id="KW-0012">Acyltransferase</keyword>
<keyword id="KW-0028">Amino-acid biosynthesis</keyword>
<keyword id="KW-0963">Cytoplasm</keyword>
<keyword id="KW-0486">Methionine biosynthesis</keyword>
<keyword id="KW-0808">Transferase</keyword>